<organism>
    <name type="scientific">Streptococcus agalactiae serotype Ia (strain ATCC 27591 / A909 / CDC SS700)</name>
    <dbReference type="NCBI Taxonomy" id="205921"/>
    <lineage>
        <taxon>Bacteria</taxon>
        <taxon>Bacillati</taxon>
        <taxon>Bacillota</taxon>
        <taxon>Bacilli</taxon>
        <taxon>Lactobacillales</taxon>
        <taxon>Streptococcaceae</taxon>
        <taxon>Streptococcus</taxon>
    </lineage>
</organism>
<keyword id="KW-0963">Cytoplasm</keyword>
<keyword id="KW-0378">Hydrolase</keyword>
<keyword id="KW-0694">RNA-binding</keyword>
<keyword id="KW-0820">tRNA-binding</keyword>
<sequence>MVKMIVGLGNPGSKYNDTKHNIGFMAIDRIVKNLDVNFTEDKNFKAEIGSDFINGEKIYFIKPTTFMNNSGIAVKALLTYYNISIKDMIIIYDDLDMEVGKIRFRQKGSAGGHNGIKSIIAHLGTQEFDRIKVGIGRPNGRMTVINHVLGKFDKNDEIMISNTLDKVDNAVKYYLQTNDFQKTMQKYNGLK</sequence>
<proteinExistence type="inferred from homology"/>
<feature type="chain" id="PRO_0000264117" description="Peptidyl-tRNA hydrolase">
    <location>
        <begin position="1"/>
        <end position="191"/>
    </location>
</feature>
<feature type="active site" description="Proton acceptor" evidence="1">
    <location>
        <position position="20"/>
    </location>
</feature>
<feature type="binding site" evidence="1">
    <location>
        <position position="15"/>
    </location>
    <ligand>
        <name>tRNA</name>
        <dbReference type="ChEBI" id="CHEBI:17843"/>
    </ligand>
</feature>
<feature type="binding site" evidence="1">
    <location>
        <position position="66"/>
    </location>
    <ligand>
        <name>tRNA</name>
        <dbReference type="ChEBI" id="CHEBI:17843"/>
    </ligand>
</feature>
<feature type="binding site" evidence="1">
    <location>
        <position position="68"/>
    </location>
    <ligand>
        <name>tRNA</name>
        <dbReference type="ChEBI" id="CHEBI:17843"/>
    </ligand>
</feature>
<feature type="binding site" evidence="1">
    <location>
        <position position="114"/>
    </location>
    <ligand>
        <name>tRNA</name>
        <dbReference type="ChEBI" id="CHEBI:17843"/>
    </ligand>
</feature>
<feature type="site" description="Discriminates between blocked and unblocked aminoacyl-tRNA" evidence="1">
    <location>
        <position position="10"/>
    </location>
</feature>
<feature type="site" description="Stabilizes the basic form of H active site to accept a proton" evidence="1">
    <location>
        <position position="93"/>
    </location>
</feature>
<dbReference type="EC" id="3.1.1.29" evidence="1"/>
<dbReference type="EMBL" id="CP000114">
    <property type="protein sequence ID" value="ABA44805.1"/>
    <property type="molecule type" value="Genomic_DNA"/>
</dbReference>
<dbReference type="RefSeq" id="WP_000240195.1">
    <property type="nucleotide sequence ID" value="NC_007432.1"/>
</dbReference>
<dbReference type="SMR" id="Q3K419"/>
<dbReference type="KEGG" id="sak:SAK_0007"/>
<dbReference type="HOGENOM" id="CLU_062456_4_1_9"/>
<dbReference type="GO" id="GO:0005737">
    <property type="term" value="C:cytoplasm"/>
    <property type="evidence" value="ECO:0007669"/>
    <property type="project" value="UniProtKB-SubCell"/>
</dbReference>
<dbReference type="GO" id="GO:0004045">
    <property type="term" value="F:peptidyl-tRNA hydrolase activity"/>
    <property type="evidence" value="ECO:0007669"/>
    <property type="project" value="UniProtKB-UniRule"/>
</dbReference>
<dbReference type="GO" id="GO:0000049">
    <property type="term" value="F:tRNA binding"/>
    <property type="evidence" value="ECO:0007669"/>
    <property type="project" value="UniProtKB-UniRule"/>
</dbReference>
<dbReference type="GO" id="GO:0006515">
    <property type="term" value="P:protein quality control for misfolded or incompletely synthesized proteins"/>
    <property type="evidence" value="ECO:0007669"/>
    <property type="project" value="UniProtKB-UniRule"/>
</dbReference>
<dbReference type="GO" id="GO:0072344">
    <property type="term" value="P:rescue of stalled ribosome"/>
    <property type="evidence" value="ECO:0007669"/>
    <property type="project" value="UniProtKB-UniRule"/>
</dbReference>
<dbReference type="CDD" id="cd00462">
    <property type="entry name" value="PTH"/>
    <property type="match status" value="1"/>
</dbReference>
<dbReference type="FunFam" id="3.40.50.1470:FF:000001">
    <property type="entry name" value="Peptidyl-tRNA hydrolase"/>
    <property type="match status" value="1"/>
</dbReference>
<dbReference type="Gene3D" id="3.40.50.1470">
    <property type="entry name" value="Peptidyl-tRNA hydrolase"/>
    <property type="match status" value="1"/>
</dbReference>
<dbReference type="HAMAP" id="MF_00083">
    <property type="entry name" value="Pept_tRNA_hydro_bact"/>
    <property type="match status" value="1"/>
</dbReference>
<dbReference type="InterPro" id="IPR001328">
    <property type="entry name" value="Pept_tRNA_hydro"/>
</dbReference>
<dbReference type="InterPro" id="IPR018171">
    <property type="entry name" value="Pept_tRNA_hydro_CS"/>
</dbReference>
<dbReference type="InterPro" id="IPR036416">
    <property type="entry name" value="Pept_tRNA_hydro_sf"/>
</dbReference>
<dbReference type="NCBIfam" id="TIGR00447">
    <property type="entry name" value="pth"/>
    <property type="match status" value="1"/>
</dbReference>
<dbReference type="PANTHER" id="PTHR17224">
    <property type="entry name" value="PEPTIDYL-TRNA HYDROLASE"/>
    <property type="match status" value="1"/>
</dbReference>
<dbReference type="PANTHER" id="PTHR17224:SF1">
    <property type="entry name" value="PEPTIDYL-TRNA HYDROLASE"/>
    <property type="match status" value="1"/>
</dbReference>
<dbReference type="Pfam" id="PF01195">
    <property type="entry name" value="Pept_tRNA_hydro"/>
    <property type="match status" value="1"/>
</dbReference>
<dbReference type="SUPFAM" id="SSF53178">
    <property type="entry name" value="Peptidyl-tRNA hydrolase-like"/>
    <property type="match status" value="1"/>
</dbReference>
<dbReference type="PROSITE" id="PS01195">
    <property type="entry name" value="PEPT_TRNA_HYDROL_1"/>
    <property type="match status" value="1"/>
</dbReference>
<dbReference type="PROSITE" id="PS01196">
    <property type="entry name" value="PEPT_TRNA_HYDROL_2"/>
    <property type="match status" value="1"/>
</dbReference>
<reference key="1">
    <citation type="journal article" date="2005" name="Proc. Natl. Acad. Sci. U.S.A.">
        <title>Genome analysis of multiple pathogenic isolates of Streptococcus agalactiae: implications for the microbial 'pan-genome'.</title>
        <authorList>
            <person name="Tettelin H."/>
            <person name="Masignani V."/>
            <person name="Cieslewicz M.J."/>
            <person name="Donati C."/>
            <person name="Medini D."/>
            <person name="Ward N.L."/>
            <person name="Angiuoli S.V."/>
            <person name="Crabtree J."/>
            <person name="Jones A.L."/>
            <person name="Durkin A.S."/>
            <person name="DeBoy R.T."/>
            <person name="Davidsen T.M."/>
            <person name="Mora M."/>
            <person name="Scarselli M."/>
            <person name="Margarit y Ros I."/>
            <person name="Peterson J.D."/>
            <person name="Hauser C.R."/>
            <person name="Sundaram J.P."/>
            <person name="Nelson W.C."/>
            <person name="Madupu R."/>
            <person name="Brinkac L.M."/>
            <person name="Dodson R.J."/>
            <person name="Rosovitz M.J."/>
            <person name="Sullivan S.A."/>
            <person name="Daugherty S.C."/>
            <person name="Haft D.H."/>
            <person name="Selengut J."/>
            <person name="Gwinn M.L."/>
            <person name="Zhou L."/>
            <person name="Zafar N."/>
            <person name="Khouri H."/>
            <person name="Radune D."/>
            <person name="Dimitrov G."/>
            <person name="Watkins K."/>
            <person name="O'Connor K.J."/>
            <person name="Smith S."/>
            <person name="Utterback T.R."/>
            <person name="White O."/>
            <person name="Rubens C.E."/>
            <person name="Grandi G."/>
            <person name="Madoff L.C."/>
            <person name="Kasper D.L."/>
            <person name="Telford J.L."/>
            <person name="Wessels M.R."/>
            <person name="Rappuoli R."/>
            <person name="Fraser C.M."/>
        </authorList>
    </citation>
    <scope>NUCLEOTIDE SEQUENCE [LARGE SCALE GENOMIC DNA]</scope>
    <source>
        <strain>ATCC 27591 / A909 / CDC SS700</strain>
    </source>
</reference>
<gene>
    <name evidence="1" type="primary">pth</name>
    <name type="ordered locus">SAK_0007</name>
</gene>
<evidence type="ECO:0000255" key="1">
    <source>
        <dbReference type="HAMAP-Rule" id="MF_00083"/>
    </source>
</evidence>
<protein>
    <recommendedName>
        <fullName evidence="1">Peptidyl-tRNA hydrolase</fullName>
        <shortName evidence="1">Pth</shortName>
        <ecNumber evidence="1">3.1.1.29</ecNumber>
    </recommendedName>
</protein>
<accession>Q3K419</accession>
<comment type="function">
    <text evidence="1">Hydrolyzes ribosome-free peptidyl-tRNAs (with 1 or more amino acids incorporated), which drop off the ribosome during protein synthesis, or as a result of ribosome stalling.</text>
</comment>
<comment type="function">
    <text evidence="1">Catalyzes the release of premature peptidyl moieties from peptidyl-tRNA molecules trapped in stalled 50S ribosomal subunits, and thus maintains levels of free tRNAs and 50S ribosomes.</text>
</comment>
<comment type="catalytic activity">
    <reaction evidence="1">
        <text>an N-acyl-L-alpha-aminoacyl-tRNA + H2O = an N-acyl-L-amino acid + a tRNA + H(+)</text>
        <dbReference type="Rhea" id="RHEA:54448"/>
        <dbReference type="Rhea" id="RHEA-COMP:10123"/>
        <dbReference type="Rhea" id="RHEA-COMP:13883"/>
        <dbReference type="ChEBI" id="CHEBI:15377"/>
        <dbReference type="ChEBI" id="CHEBI:15378"/>
        <dbReference type="ChEBI" id="CHEBI:59874"/>
        <dbReference type="ChEBI" id="CHEBI:78442"/>
        <dbReference type="ChEBI" id="CHEBI:138191"/>
        <dbReference type="EC" id="3.1.1.29"/>
    </reaction>
</comment>
<comment type="subunit">
    <text evidence="1">Monomer.</text>
</comment>
<comment type="subcellular location">
    <subcellularLocation>
        <location evidence="1">Cytoplasm</location>
    </subcellularLocation>
</comment>
<comment type="similarity">
    <text evidence="1">Belongs to the PTH family.</text>
</comment>
<name>PTH_STRA1</name>